<gene>
    <name evidence="1" type="primary">obg</name>
    <name type="ordered locus">RBE_1324</name>
</gene>
<accession>Q1RGV9</accession>
<protein>
    <recommendedName>
        <fullName evidence="1">GTPase Obg</fullName>
        <ecNumber evidence="1">3.6.5.-</ecNumber>
    </recommendedName>
    <alternativeName>
        <fullName evidence="1">GTP-binding protein Obg</fullName>
    </alternativeName>
</protein>
<name>OBG_RICBR</name>
<proteinExistence type="inferred from homology"/>
<comment type="function">
    <text evidence="1">An essential GTPase which binds GTP, GDP and possibly (p)ppGpp with moderate affinity, with high nucleotide exchange rates and a fairly low GTP hydrolysis rate. Plays a role in control of the cell cycle, stress response, ribosome biogenesis and in those bacteria that undergo differentiation, in morphogenesis control.</text>
</comment>
<comment type="cofactor">
    <cofactor evidence="1">
        <name>Mg(2+)</name>
        <dbReference type="ChEBI" id="CHEBI:18420"/>
    </cofactor>
</comment>
<comment type="subunit">
    <text evidence="1">Monomer.</text>
</comment>
<comment type="subcellular location">
    <subcellularLocation>
        <location evidence="1">Cytoplasm</location>
    </subcellularLocation>
</comment>
<comment type="similarity">
    <text evidence="1">Belongs to the TRAFAC class OBG-HflX-like GTPase superfamily. OBG GTPase family.</text>
</comment>
<feature type="chain" id="PRO_0000386200" description="GTPase Obg">
    <location>
        <begin position="1"/>
        <end position="328"/>
    </location>
</feature>
<feature type="domain" description="Obg" evidence="2">
    <location>
        <begin position="1"/>
        <end position="159"/>
    </location>
</feature>
<feature type="domain" description="OBG-type G" evidence="1">
    <location>
        <begin position="160"/>
        <end position="327"/>
    </location>
</feature>
<feature type="binding site" evidence="1">
    <location>
        <begin position="166"/>
        <end position="173"/>
    </location>
    <ligand>
        <name>GTP</name>
        <dbReference type="ChEBI" id="CHEBI:37565"/>
    </ligand>
</feature>
<feature type="binding site" evidence="1">
    <location>
        <position position="173"/>
    </location>
    <ligand>
        <name>Mg(2+)</name>
        <dbReference type="ChEBI" id="CHEBI:18420"/>
    </ligand>
</feature>
<feature type="binding site" evidence="1">
    <location>
        <begin position="191"/>
        <end position="195"/>
    </location>
    <ligand>
        <name>GTP</name>
        <dbReference type="ChEBI" id="CHEBI:37565"/>
    </ligand>
</feature>
<feature type="binding site" evidence="1">
    <location>
        <position position="193"/>
    </location>
    <ligand>
        <name>Mg(2+)</name>
        <dbReference type="ChEBI" id="CHEBI:18420"/>
    </ligand>
</feature>
<feature type="binding site" evidence="1">
    <location>
        <begin position="212"/>
        <end position="215"/>
    </location>
    <ligand>
        <name>GTP</name>
        <dbReference type="ChEBI" id="CHEBI:37565"/>
    </ligand>
</feature>
<feature type="binding site" evidence="1">
    <location>
        <begin position="279"/>
        <end position="282"/>
    </location>
    <ligand>
        <name>GTP</name>
        <dbReference type="ChEBI" id="CHEBI:37565"/>
    </ligand>
</feature>
<feature type="binding site" evidence="1">
    <location>
        <begin position="308"/>
        <end position="310"/>
    </location>
    <ligand>
        <name>GTP</name>
        <dbReference type="ChEBI" id="CHEBI:37565"/>
    </ligand>
</feature>
<keyword id="KW-0963">Cytoplasm</keyword>
<keyword id="KW-0342">GTP-binding</keyword>
<keyword id="KW-0378">Hydrolase</keyword>
<keyword id="KW-0460">Magnesium</keyword>
<keyword id="KW-0479">Metal-binding</keyword>
<keyword id="KW-0547">Nucleotide-binding</keyword>
<organism>
    <name type="scientific">Rickettsia bellii (strain RML369-C)</name>
    <dbReference type="NCBI Taxonomy" id="336407"/>
    <lineage>
        <taxon>Bacteria</taxon>
        <taxon>Pseudomonadati</taxon>
        <taxon>Pseudomonadota</taxon>
        <taxon>Alphaproteobacteria</taxon>
        <taxon>Rickettsiales</taxon>
        <taxon>Rickettsiaceae</taxon>
        <taxon>Rickettsieae</taxon>
        <taxon>Rickettsia</taxon>
        <taxon>belli group</taxon>
    </lineage>
</organism>
<evidence type="ECO:0000255" key="1">
    <source>
        <dbReference type="HAMAP-Rule" id="MF_01454"/>
    </source>
</evidence>
<evidence type="ECO:0000255" key="2">
    <source>
        <dbReference type="PROSITE-ProRule" id="PRU01231"/>
    </source>
</evidence>
<reference key="1">
    <citation type="journal article" date="2006" name="PLoS Genet.">
        <title>Genome sequence of Rickettsia bellii illuminates the role of amoebae in gene exchanges between intracellular pathogens.</title>
        <authorList>
            <person name="Ogata H."/>
            <person name="La Scola B."/>
            <person name="Audic S."/>
            <person name="Renesto P."/>
            <person name="Blanc G."/>
            <person name="Robert C."/>
            <person name="Fournier P.-E."/>
            <person name="Claverie J.-M."/>
            <person name="Raoult D."/>
        </authorList>
    </citation>
    <scope>NUCLEOTIDE SEQUENCE [LARGE SCALE GENOMIC DNA]</scope>
    <source>
        <strain>RML369-C</strain>
    </source>
</reference>
<dbReference type="EC" id="3.6.5.-" evidence="1"/>
<dbReference type="EMBL" id="CP000087">
    <property type="protein sequence ID" value="ABE05405.1"/>
    <property type="molecule type" value="Genomic_DNA"/>
</dbReference>
<dbReference type="SMR" id="Q1RGV9"/>
<dbReference type="KEGG" id="rbe:RBE_1324"/>
<dbReference type="eggNOG" id="COG0536">
    <property type="taxonomic scope" value="Bacteria"/>
</dbReference>
<dbReference type="HOGENOM" id="CLU_011747_2_3_5"/>
<dbReference type="OrthoDB" id="9807318at2"/>
<dbReference type="Proteomes" id="UP000001951">
    <property type="component" value="Chromosome"/>
</dbReference>
<dbReference type="GO" id="GO:0005737">
    <property type="term" value="C:cytoplasm"/>
    <property type="evidence" value="ECO:0007669"/>
    <property type="project" value="UniProtKB-SubCell"/>
</dbReference>
<dbReference type="GO" id="GO:0005525">
    <property type="term" value="F:GTP binding"/>
    <property type="evidence" value="ECO:0007669"/>
    <property type="project" value="UniProtKB-UniRule"/>
</dbReference>
<dbReference type="GO" id="GO:0003924">
    <property type="term" value="F:GTPase activity"/>
    <property type="evidence" value="ECO:0007669"/>
    <property type="project" value="UniProtKB-UniRule"/>
</dbReference>
<dbReference type="GO" id="GO:0000287">
    <property type="term" value="F:magnesium ion binding"/>
    <property type="evidence" value="ECO:0007669"/>
    <property type="project" value="InterPro"/>
</dbReference>
<dbReference type="GO" id="GO:0042254">
    <property type="term" value="P:ribosome biogenesis"/>
    <property type="evidence" value="ECO:0007669"/>
    <property type="project" value="UniProtKB-UniRule"/>
</dbReference>
<dbReference type="CDD" id="cd01898">
    <property type="entry name" value="Obg"/>
    <property type="match status" value="1"/>
</dbReference>
<dbReference type="FunFam" id="2.70.210.12:FF:000001">
    <property type="entry name" value="GTPase Obg"/>
    <property type="match status" value="1"/>
</dbReference>
<dbReference type="Gene3D" id="2.70.210.12">
    <property type="entry name" value="GTP1/OBG domain"/>
    <property type="match status" value="1"/>
</dbReference>
<dbReference type="Gene3D" id="3.40.50.300">
    <property type="entry name" value="P-loop containing nucleotide triphosphate hydrolases"/>
    <property type="match status" value="1"/>
</dbReference>
<dbReference type="HAMAP" id="MF_01454">
    <property type="entry name" value="GTPase_Obg"/>
    <property type="match status" value="1"/>
</dbReference>
<dbReference type="InterPro" id="IPR031167">
    <property type="entry name" value="G_OBG"/>
</dbReference>
<dbReference type="InterPro" id="IPR006073">
    <property type="entry name" value="GTP-bd"/>
</dbReference>
<dbReference type="InterPro" id="IPR014100">
    <property type="entry name" value="GTP-bd_Obg/CgtA"/>
</dbReference>
<dbReference type="InterPro" id="IPR006074">
    <property type="entry name" value="GTP1-OBG_CS"/>
</dbReference>
<dbReference type="InterPro" id="IPR006169">
    <property type="entry name" value="GTP1_OBG_dom"/>
</dbReference>
<dbReference type="InterPro" id="IPR036726">
    <property type="entry name" value="GTP1_OBG_dom_sf"/>
</dbReference>
<dbReference type="InterPro" id="IPR045086">
    <property type="entry name" value="OBG_GTPase"/>
</dbReference>
<dbReference type="InterPro" id="IPR027417">
    <property type="entry name" value="P-loop_NTPase"/>
</dbReference>
<dbReference type="InterPro" id="IPR005225">
    <property type="entry name" value="Small_GTP-bd"/>
</dbReference>
<dbReference type="NCBIfam" id="TIGR02729">
    <property type="entry name" value="Obg_CgtA"/>
    <property type="match status" value="1"/>
</dbReference>
<dbReference type="NCBIfam" id="NF008955">
    <property type="entry name" value="PRK12297.1"/>
    <property type="match status" value="1"/>
</dbReference>
<dbReference type="NCBIfam" id="NF008956">
    <property type="entry name" value="PRK12299.1"/>
    <property type="match status" value="1"/>
</dbReference>
<dbReference type="NCBIfam" id="TIGR00231">
    <property type="entry name" value="small_GTP"/>
    <property type="match status" value="1"/>
</dbReference>
<dbReference type="PANTHER" id="PTHR11702">
    <property type="entry name" value="DEVELOPMENTALLY REGULATED GTP-BINDING PROTEIN-RELATED"/>
    <property type="match status" value="1"/>
</dbReference>
<dbReference type="PANTHER" id="PTHR11702:SF31">
    <property type="entry name" value="MITOCHONDRIAL RIBOSOME-ASSOCIATED GTPASE 2"/>
    <property type="match status" value="1"/>
</dbReference>
<dbReference type="Pfam" id="PF01018">
    <property type="entry name" value="GTP1_OBG"/>
    <property type="match status" value="1"/>
</dbReference>
<dbReference type="Pfam" id="PF01926">
    <property type="entry name" value="MMR_HSR1"/>
    <property type="match status" value="1"/>
</dbReference>
<dbReference type="PIRSF" id="PIRSF002401">
    <property type="entry name" value="GTP_bd_Obg/CgtA"/>
    <property type="match status" value="1"/>
</dbReference>
<dbReference type="PRINTS" id="PR00326">
    <property type="entry name" value="GTP1OBG"/>
</dbReference>
<dbReference type="SUPFAM" id="SSF82051">
    <property type="entry name" value="Obg GTP-binding protein N-terminal domain"/>
    <property type="match status" value="1"/>
</dbReference>
<dbReference type="SUPFAM" id="SSF52540">
    <property type="entry name" value="P-loop containing nucleoside triphosphate hydrolases"/>
    <property type="match status" value="1"/>
</dbReference>
<dbReference type="PROSITE" id="PS51710">
    <property type="entry name" value="G_OBG"/>
    <property type="match status" value="1"/>
</dbReference>
<dbReference type="PROSITE" id="PS00905">
    <property type="entry name" value="GTP1_OBG"/>
    <property type="match status" value="1"/>
</dbReference>
<dbReference type="PROSITE" id="PS51883">
    <property type="entry name" value="OBG"/>
    <property type="match status" value="1"/>
</dbReference>
<sequence>MNFIDEVKIYIKGGNGGNGCVSFHREKFIDRGGPDGGDGGRGGSIIFRSNHHLNTLVNYRYKQHFIADSGENGKGSNKSGKSGKSLTLDVPIGTQIFAEDSDILLHDFTEDDQTFEIIKGGNGGLGNSHFKTSVNQAPRRRTEGEIAEEMWVQLSLKLLSDVGLVGLPNAGKSTFLSVVSAAKPKIADYPFTTLVPNLGVVYIDDEEFVIADIPGLIEGASQGHGLGDKFLKHIERCNVLIHLIDGSSEDVVADYNIVRTELESYSDYLKDKTQIICLNKIDVLTDEEIAEKTTQLQKITGKEIFPISTYTNTGITKIIKLALQTIKD</sequence>